<gene>
    <name type="primary">COBL6</name>
    <name type="ordered locus">At1g09790</name>
    <name type="ORF">F21M12.17</name>
    <name type="ORF">F21M12_18</name>
</gene>
<protein>
    <recommendedName>
        <fullName>COBRA-like protein 6</fullName>
    </recommendedName>
</protein>
<evidence type="ECO:0000255" key="1"/>
<evidence type="ECO:0000269" key="2">
    <source>
    </source>
</evidence>
<evidence type="ECO:0000305" key="3"/>
<dbReference type="EMBL" id="AC000132">
    <property type="protein sequence ID" value="AAB60732.1"/>
    <property type="status" value="ALT_SEQ"/>
    <property type="molecule type" value="Genomic_DNA"/>
</dbReference>
<dbReference type="EMBL" id="CP002684">
    <property type="protein sequence ID" value="AEE28492.1"/>
    <property type="molecule type" value="Genomic_DNA"/>
</dbReference>
<dbReference type="PIR" id="H86231">
    <property type="entry name" value="H86231"/>
</dbReference>
<dbReference type="RefSeq" id="NP_172450.2">
    <property type="nucleotide sequence ID" value="NM_100851.2"/>
</dbReference>
<dbReference type="STRING" id="3702.O04500"/>
<dbReference type="GlyCosmos" id="O04500">
    <property type="glycosylation" value="5 sites, No reported glycans"/>
</dbReference>
<dbReference type="GlyGen" id="O04500">
    <property type="glycosylation" value="6 sites"/>
</dbReference>
<dbReference type="PaxDb" id="3702-AT1G09790.1"/>
<dbReference type="ProteomicsDB" id="241138"/>
<dbReference type="EnsemblPlants" id="AT1G09790.1">
    <property type="protein sequence ID" value="AT1G09790.1"/>
    <property type="gene ID" value="AT1G09790"/>
</dbReference>
<dbReference type="GeneID" id="837508"/>
<dbReference type="Gramene" id="AT1G09790.1">
    <property type="protein sequence ID" value="AT1G09790.1"/>
    <property type="gene ID" value="AT1G09790"/>
</dbReference>
<dbReference type="KEGG" id="ath:AT1G09790"/>
<dbReference type="Araport" id="AT1G09790"/>
<dbReference type="TAIR" id="AT1G09790">
    <property type="gene designation" value="COBL6"/>
</dbReference>
<dbReference type="eggNOG" id="ENOG502QT9D">
    <property type="taxonomic scope" value="Eukaryota"/>
</dbReference>
<dbReference type="HOGENOM" id="CLU_038120_0_0_1"/>
<dbReference type="InParanoid" id="O04500"/>
<dbReference type="PhylomeDB" id="O04500"/>
<dbReference type="PRO" id="PR:O04500"/>
<dbReference type="Proteomes" id="UP000006548">
    <property type="component" value="Chromosome 1"/>
</dbReference>
<dbReference type="ExpressionAtlas" id="O04500">
    <property type="expression patterns" value="baseline and differential"/>
</dbReference>
<dbReference type="GO" id="GO:0005886">
    <property type="term" value="C:plasma membrane"/>
    <property type="evidence" value="ECO:0007669"/>
    <property type="project" value="UniProtKB-SubCell"/>
</dbReference>
<dbReference type="GO" id="GO:0098552">
    <property type="term" value="C:side of membrane"/>
    <property type="evidence" value="ECO:0007669"/>
    <property type="project" value="UniProtKB-KW"/>
</dbReference>
<dbReference type="GO" id="GO:0010215">
    <property type="term" value="P:cellulose microfibril organization"/>
    <property type="evidence" value="ECO:0007669"/>
    <property type="project" value="InterPro"/>
</dbReference>
<dbReference type="InterPro" id="IPR056900">
    <property type="entry name" value="COB_C"/>
</dbReference>
<dbReference type="InterPro" id="IPR006918">
    <property type="entry name" value="COBRA_pln"/>
</dbReference>
<dbReference type="PANTHER" id="PTHR31673:SF30">
    <property type="entry name" value="COBRA-LIKE PROTEIN 6"/>
    <property type="match status" value="1"/>
</dbReference>
<dbReference type="PANTHER" id="PTHR31673">
    <property type="entry name" value="PROTEIN COBRA"/>
    <property type="match status" value="1"/>
</dbReference>
<dbReference type="Pfam" id="PF25079">
    <property type="entry name" value="COB_C"/>
    <property type="match status" value="1"/>
</dbReference>
<dbReference type="Pfam" id="PF04833">
    <property type="entry name" value="COBRA"/>
    <property type="match status" value="1"/>
</dbReference>
<dbReference type="PIRSF" id="PIRSF038122">
    <property type="entry name" value="COBRA"/>
    <property type="match status" value="1"/>
</dbReference>
<comment type="subcellular location">
    <subcellularLocation>
        <location evidence="3">Cell membrane</location>
        <topology evidence="3">Lipid-anchor</topology>
        <topology evidence="3">GPI-anchor</topology>
    </subcellularLocation>
</comment>
<comment type="tissue specificity">
    <text evidence="2">Expressed in flowers and siliques.</text>
</comment>
<comment type="similarity">
    <text evidence="3">Belongs to the COBRA family.</text>
</comment>
<comment type="sequence caution" evidence="3">
    <conflict type="erroneous gene model prediction">
        <sequence resource="EMBL-CDS" id="AAB60732"/>
    </conflict>
</comment>
<sequence length="454" mass="50954">MGAMLNLLLVVTVILCSILSPTRFMIMIDKMVADGYDPLDPFGKIIIKWDLLLSSPGQHHVQVTLENMQEYRHVEKPGWKLSWHWLNQEVIWDMKGAETTEQGNCSAFASSGNLPHCCLERPTIVDLLPGASLNVQVANCCRGGVLTSMSQDHANHVSAFHMTVGSSPDGPEEFNMPSNFDIGVPGYSCDNATSVSPTKFSTDKGRRKTQALATWEAVCVYSQFRSSPSPKCCVSLSAFYYQNIVPCPTCSCGCSSSHCVKDGELPPYLEQKHDPDEEVSPVVKCSDHMCPIRIHWHVKVNYREYWRVKITATNFNTMKNYTNWNLVVLHPNLKSVQQVFSFNYKSLTPYQNSINDTGMFWGVQFYNDVLLQEGKIGNVQTELLLKKDMGNFTFREGWAFPRRILFNGDECVMPSPDDFPRLPKSAHSSSSSSAVISSVSVVFCFLLHHLLLLV</sequence>
<keyword id="KW-1003">Cell membrane</keyword>
<keyword id="KW-0325">Glycoprotein</keyword>
<keyword id="KW-0336">GPI-anchor</keyword>
<keyword id="KW-0449">Lipoprotein</keyword>
<keyword id="KW-0472">Membrane</keyword>
<keyword id="KW-1185">Reference proteome</keyword>
<keyword id="KW-0732">Signal</keyword>
<name>COBL6_ARATH</name>
<feature type="signal peptide" evidence="1">
    <location>
        <begin position="1"/>
        <end position="24"/>
    </location>
</feature>
<feature type="chain" id="PRO_0000005579" description="COBRA-like protein 6">
    <location>
        <begin position="25"/>
        <end position="429"/>
    </location>
</feature>
<feature type="propeptide" id="PRO_0000005580" description="Removed in mature form" evidence="1">
    <location>
        <begin position="430"/>
        <end position="454"/>
    </location>
</feature>
<feature type="lipid moiety-binding region" description="GPI-anchor amidated serine" evidence="1">
    <location>
        <position position="429"/>
    </location>
</feature>
<feature type="glycosylation site" description="N-linked (GlcNAc...) asparagine" evidence="1">
    <location>
        <position position="104"/>
    </location>
</feature>
<feature type="glycosylation site" description="N-linked (GlcNAc...) asparagine" evidence="1">
    <location>
        <position position="191"/>
    </location>
</feature>
<feature type="glycosylation site" description="N-linked (GlcNAc...) asparagine" evidence="1">
    <location>
        <position position="320"/>
    </location>
</feature>
<feature type="glycosylation site" description="N-linked (GlcNAc...) asparagine" evidence="1">
    <location>
        <position position="355"/>
    </location>
</feature>
<feature type="glycosylation site" description="N-linked (GlcNAc...) asparagine" evidence="1">
    <location>
        <position position="391"/>
    </location>
</feature>
<proteinExistence type="evidence at transcript level"/>
<reference key="1">
    <citation type="journal article" date="2000" name="Nature">
        <title>Sequence and analysis of chromosome 1 of the plant Arabidopsis thaliana.</title>
        <authorList>
            <person name="Theologis A."/>
            <person name="Ecker J.R."/>
            <person name="Palm C.J."/>
            <person name="Federspiel N.A."/>
            <person name="Kaul S."/>
            <person name="White O."/>
            <person name="Alonso J."/>
            <person name="Altafi H."/>
            <person name="Araujo R."/>
            <person name="Bowman C.L."/>
            <person name="Brooks S.Y."/>
            <person name="Buehler E."/>
            <person name="Chan A."/>
            <person name="Chao Q."/>
            <person name="Chen H."/>
            <person name="Cheuk R.F."/>
            <person name="Chin C.W."/>
            <person name="Chung M.K."/>
            <person name="Conn L."/>
            <person name="Conway A.B."/>
            <person name="Conway A.R."/>
            <person name="Creasy T.H."/>
            <person name="Dewar K."/>
            <person name="Dunn P."/>
            <person name="Etgu P."/>
            <person name="Feldblyum T.V."/>
            <person name="Feng J.-D."/>
            <person name="Fong B."/>
            <person name="Fujii C.Y."/>
            <person name="Gill J.E."/>
            <person name="Goldsmith A.D."/>
            <person name="Haas B."/>
            <person name="Hansen N.F."/>
            <person name="Hughes B."/>
            <person name="Huizar L."/>
            <person name="Hunter J.L."/>
            <person name="Jenkins J."/>
            <person name="Johnson-Hopson C."/>
            <person name="Khan S."/>
            <person name="Khaykin E."/>
            <person name="Kim C.J."/>
            <person name="Koo H.L."/>
            <person name="Kremenetskaia I."/>
            <person name="Kurtz D.B."/>
            <person name="Kwan A."/>
            <person name="Lam B."/>
            <person name="Langin-Hooper S."/>
            <person name="Lee A."/>
            <person name="Lee J.M."/>
            <person name="Lenz C.A."/>
            <person name="Li J.H."/>
            <person name="Li Y.-P."/>
            <person name="Lin X."/>
            <person name="Liu S.X."/>
            <person name="Liu Z.A."/>
            <person name="Luros J.S."/>
            <person name="Maiti R."/>
            <person name="Marziali A."/>
            <person name="Militscher J."/>
            <person name="Miranda M."/>
            <person name="Nguyen M."/>
            <person name="Nierman W.C."/>
            <person name="Osborne B.I."/>
            <person name="Pai G."/>
            <person name="Peterson J."/>
            <person name="Pham P.K."/>
            <person name="Rizzo M."/>
            <person name="Rooney T."/>
            <person name="Rowley D."/>
            <person name="Sakano H."/>
            <person name="Salzberg S.L."/>
            <person name="Schwartz J.R."/>
            <person name="Shinn P."/>
            <person name="Southwick A.M."/>
            <person name="Sun H."/>
            <person name="Tallon L.J."/>
            <person name="Tambunga G."/>
            <person name="Toriumi M.J."/>
            <person name="Town C.D."/>
            <person name="Utterback T."/>
            <person name="Van Aken S."/>
            <person name="Vaysberg M."/>
            <person name="Vysotskaia V.S."/>
            <person name="Walker M."/>
            <person name="Wu D."/>
            <person name="Yu G."/>
            <person name="Fraser C.M."/>
            <person name="Venter J.C."/>
            <person name="Davis R.W."/>
        </authorList>
    </citation>
    <scope>NUCLEOTIDE SEQUENCE [LARGE SCALE GENOMIC DNA]</scope>
    <source>
        <strain>cv. Columbia</strain>
    </source>
</reference>
<reference key="2">
    <citation type="journal article" date="2017" name="Plant J.">
        <title>Araport11: a complete reannotation of the Arabidopsis thaliana reference genome.</title>
        <authorList>
            <person name="Cheng C.Y."/>
            <person name="Krishnakumar V."/>
            <person name="Chan A.P."/>
            <person name="Thibaud-Nissen F."/>
            <person name="Schobel S."/>
            <person name="Town C.D."/>
        </authorList>
    </citation>
    <scope>GENOME REANNOTATION</scope>
    <source>
        <strain>cv. Columbia</strain>
    </source>
</reference>
<reference key="3">
    <citation type="unpublished observations" date="2003-07">
        <authorList>
            <person name="Haas B."/>
        </authorList>
    </citation>
    <scope>CONCEPTUAL TRANSLATION</scope>
</reference>
<reference key="4">
    <citation type="journal article" date="2002" name="Plant Physiol.">
        <title>The COBRA family of putative GPI-anchored proteins in Arabidopsis. A new fellowship in expansion.</title>
        <authorList>
            <person name="Roudier F."/>
            <person name="Schindelman G."/>
            <person name="DeSalle R."/>
            <person name="Benfey P.N."/>
        </authorList>
    </citation>
    <scope>TISSUE SPECIFICITY</scope>
</reference>
<organism>
    <name type="scientific">Arabidopsis thaliana</name>
    <name type="common">Mouse-ear cress</name>
    <dbReference type="NCBI Taxonomy" id="3702"/>
    <lineage>
        <taxon>Eukaryota</taxon>
        <taxon>Viridiplantae</taxon>
        <taxon>Streptophyta</taxon>
        <taxon>Embryophyta</taxon>
        <taxon>Tracheophyta</taxon>
        <taxon>Spermatophyta</taxon>
        <taxon>Magnoliopsida</taxon>
        <taxon>eudicotyledons</taxon>
        <taxon>Gunneridae</taxon>
        <taxon>Pentapetalae</taxon>
        <taxon>rosids</taxon>
        <taxon>malvids</taxon>
        <taxon>Brassicales</taxon>
        <taxon>Brassicaceae</taxon>
        <taxon>Camelineae</taxon>
        <taxon>Arabidopsis</taxon>
    </lineage>
</organism>
<accession>O04500</accession>